<protein>
    <recommendedName>
        <fullName evidence="5">Short-chain dehydrogenase anuI</fullName>
        <ecNumber evidence="7">1.1.1.-</ecNumber>
    </recommendedName>
    <alternativeName>
        <fullName evidence="5">Annullatin D biosynthesis cluster protein I</fullName>
    </alternativeName>
</protein>
<sequence>MAAVTKPLVLITGANQGLGFATAQQLASTGQYNLLVAARSQEKAEGAVKQLESSTNSSLTPIVIDLDQDESITAAAKFVEERFGSLDILINNAGINRSSDPNATLRESYRAVFETNVFGVAVMTATFLPLLRASKYHDRRIVNVTSGLGQIGIAYSPTSEYSAKIWELPIYRSSKSAINMISAVDAVSLEKENILVVLAAPGFCRTNFGGGQGVKSAEEGARPIVRAATEGSPKELFGKLVDDENTLVEFGW</sequence>
<feature type="chain" id="PRO_0000458206" description="Short-chain dehydrogenase anuI">
    <location>
        <begin position="1"/>
        <end position="252"/>
    </location>
</feature>
<feature type="active site" description="Proton acceptor" evidence="3">
    <location>
        <position position="171"/>
    </location>
</feature>
<feature type="active site" description="Proton donor" evidence="2">
    <location>
        <position position="171"/>
    </location>
</feature>
<feature type="active site" description="Lowers pKa of active site Tyr" evidence="2">
    <location>
        <position position="175"/>
    </location>
</feature>
<feature type="binding site" evidence="1">
    <location>
        <position position="18"/>
    </location>
    <ligand>
        <name>NADP(+)</name>
        <dbReference type="ChEBI" id="CHEBI:58349"/>
    </ligand>
</feature>
<feature type="binding site" evidence="1">
    <location>
        <position position="65"/>
    </location>
    <ligand>
        <name>NADP(+)</name>
        <dbReference type="ChEBI" id="CHEBI:58349"/>
    </ligand>
</feature>
<feature type="binding site" evidence="2">
    <location>
        <position position="92"/>
    </location>
    <ligand>
        <name>NADP(+)</name>
        <dbReference type="ChEBI" id="CHEBI:58349"/>
    </ligand>
</feature>
<feature type="binding site" evidence="2">
    <location>
        <position position="171"/>
    </location>
    <ligand>
        <name>NADP(+)</name>
        <dbReference type="ChEBI" id="CHEBI:58349"/>
    </ligand>
</feature>
<feature type="binding site" evidence="2">
    <location>
        <position position="175"/>
    </location>
    <ligand>
        <name>NADP(+)</name>
        <dbReference type="ChEBI" id="CHEBI:58349"/>
    </ligand>
</feature>
<feature type="binding site" evidence="1">
    <location>
        <position position="206"/>
    </location>
    <ligand>
        <name>NADP(+)</name>
        <dbReference type="ChEBI" id="CHEBI:58349"/>
    </ligand>
</feature>
<proteinExistence type="inferred from homology"/>
<organism>
    <name type="scientific">Penicillium roqueforti (strain FM164)</name>
    <dbReference type="NCBI Taxonomy" id="1365484"/>
    <lineage>
        <taxon>Eukaryota</taxon>
        <taxon>Fungi</taxon>
        <taxon>Dikarya</taxon>
        <taxon>Ascomycota</taxon>
        <taxon>Pezizomycotina</taxon>
        <taxon>Eurotiomycetes</taxon>
        <taxon>Eurotiomycetidae</taxon>
        <taxon>Eurotiales</taxon>
        <taxon>Aspergillaceae</taxon>
        <taxon>Penicillium</taxon>
    </lineage>
</organism>
<evidence type="ECO:0000250" key="1">
    <source>
        <dbReference type="UniProtKB" id="L0E2Z4"/>
    </source>
</evidence>
<evidence type="ECO:0000250" key="2">
    <source>
        <dbReference type="UniProtKB" id="O93868"/>
    </source>
</evidence>
<evidence type="ECO:0000250" key="3">
    <source>
        <dbReference type="UniProtKB" id="Q92506"/>
    </source>
</evidence>
<evidence type="ECO:0000269" key="4">
    <source>
    </source>
</evidence>
<evidence type="ECO:0000303" key="5">
    <source>
    </source>
</evidence>
<evidence type="ECO:0000305" key="6"/>
<evidence type="ECO:0000305" key="7">
    <source>
    </source>
</evidence>
<reference key="1">
    <citation type="journal article" date="2014" name="Nat. Commun.">
        <title>Multiple recent horizontal transfers of a large genomic region in cheese making fungi.</title>
        <authorList>
            <person name="Cheeseman K."/>
            <person name="Ropars J."/>
            <person name="Renault P."/>
            <person name="Dupont J."/>
            <person name="Gouzy J."/>
            <person name="Branca A."/>
            <person name="Abraham A.-L."/>
            <person name="Ceppi M."/>
            <person name="Conseiller E."/>
            <person name="Debuchy R."/>
            <person name="Malagnac F."/>
            <person name="Goarin A."/>
            <person name="Silar P."/>
            <person name="Lacoste S."/>
            <person name="Sallet E."/>
            <person name="Bensimon A."/>
            <person name="Giraud T."/>
            <person name="Brygoo Y."/>
        </authorList>
    </citation>
    <scope>NUCLEOTIDE SEQUENCE [LARGE SCALE GENOMIC DNA]</scope>
    <source>
        <strain>FM164</strain>
    </source>
</reference>
<reference key="2">
    <citation type="journal article" date="2022" name="Org. Lett.">
        <title>Biosynthesis of Annullatin D in Penicillium roqueforti Implies Oxidative Lactonization between Two Hydroxyl Groups Catalyzed by a BBE-like Enzyme.</title>
        <authorList>
            <person name="Xiang P."/>
            <person name="Kemmerich B."/>
            <person name="Yang L."/>
            <person name="Li S.M."/>
        </authorList>
    </citation>
    <scope>FUNCTION</scope>
    <scope>DISRUPTION PHENOTYPE</scope>
</reference>
<keyword id="KW-0521">NADP</keyword>
<keyword id="KW-0560">Oxidoreductase</keyword>
<keyword id="KW-1185">Reference proteome</keyword>
<name>ANUI_PENRF</name>
<gene>
    <name evidence="5" type="primary">anuI</name>
    <name type="ORF">PROQFM164_S03g001182</name>
</gene>
<accession>W6QCN3</accession>
<dbReference type="EC" id="1.1.1.-" evidence="7"/>
<dbReference type="EMBL" id="HG792017">
    <property type="protein sequence ID" value="CDM34458.1"/>
    <property type="molecule type" value="Genomic_DNA"/>
</dbReference>
<dbReference type="SMR" id="W6QCN3"/>
<dbReference type="STRING" id="1365484.W6QCN3"/>
<dbReference type="OMA" id="QCEISEF"/>
<dbReference type="OrthoDB" id="191139at2759"/>
<dbReference type="Proteomes" id="UP000030686">
    <property type="component" value="Unassembled WGS sequence"/>
</dbReference>
<dbReference type="GO" id="GO:0016491">
    <property type="term" value="F:oxidoreductase activity"/>
    <property type="evidence" value="ECO:0007669"/>
    <property type="project" value="UniProtKB-KW"/>
</dbReference>
<dbReference type="Gene3D" id="3.40.50.720">
    <property type="entry name" value="NAD(P)-binding Rossmann-like Domain"/>
    <property type="match status" value="1"/>
</dbReference>
<dbReference type="InterPro" id="IPR036291">
    <property type="entry name" value="NAD(P)-bd_dom_sf"/>
</dbReference>
<dbReference type="InterPro" id="IPR002347">
    <property type="entry name" value="SDR_fam"/>
</dbReference>
<dbReference type="PANTHER" id="PTHR43963">
    <property type="entry name" value="CARBONYL REDUCTASE 1-RELATED"/>
    <property type="match status" value="1"/>
</dbReference>
<dbReference type="PANTHER" id="PTHR43963:SF6">
    <property type="entry name" value="CHAIN DEHYDROGENASE FAMILY PROTEIN, PUTATIVE (AFU_ORTHOLOGUE AFUA_3G15350)-RELATED"/>
    <property type="match status" value="1"/>
</dbReference>
<dbReference type="Pfam" id="PF00106">
    <property type="entry name" value="adh_short"/>
    <property type="match status" value="1"/>
</dbReference>
<dbReference type="PRINTS" id="PR00081">
    <property type="entry name" value="GDHRDH"/>
</dbReference>
<dbReference type="PRINTS" id="PR00080">
    <property type="entry name" value="SDRFAMILY"/>
</dbReference>
<dbReference type="SUPFAM" id="SSF51735">
    <property type="entry name" value="NAD(P)-binding Rossmann-fold domains"/>
    <property type="match status" value="1"/>
</dbReference>
<comment type="function">
    <text evidence="4 7">Highly reducing polyketide synthase; part of the gene cluster that mediates the biosynthesis of annullatin D, an alkylated aromatic polyketide with a fused dihydrobenzofuran lactone ring system that exhibits potent agonistic activities toward the cannabinoid receptors (PubMed:35939524). AnuI does not seem to play a role within the pathway (PubMed:35939524). The annullatin backbone 2-hydroxymethyl-3-pentylphenol is assembled from one acetyl-CoA starter unit and 5 malonyl-CoA elongation units by cooperation of the highly reducing polyketide synthase anuA, the short-chain dehydrogenase anuB and the oxidoreductase anuC, before being hydroxylated at the C-5 alkyl chain by the cytochrome P450 monooxygenase anuE to form (8S)-annullatin E. The prenyltransferase anuH subsequently installs one isoprenyl group at the benzene ring to form (8S)-annullatin J. Enzymatic or nonenzymatic dihydro-benzofuran ring formation between the prenyl and the phenolic hydroxyl groups in (8S)-annullatin J results in two diastereomers (2S,9S)-annullatin H and compound 12. The intermediate (2S,9S)-annullatin H is then converted to (2S,9S)-annullatin D by the FAD-linked oxidoreductase anuG-catalyzed five-member lactone ring formation. The isomer 12 acts as a substrate for the short-chain dehydrogenase anuF and is oxidized to (2R)-annullatin F, which is subsequently acetylated by an acetyltransferase leading to (2R)-annullatin G formation. The remaining enzymes identified within the cluster, anuD, anuI and anuJ, seem not to be involved in annullatin biosynthesis (Probable).</text>
</comment>
<comment type="disruption phenotype">
    <text evidence="4">Does not affect the annullatin D biosynthesis pathway.</text>
</comment>
<comment type="similarity">
    <text evidence="6">Belongs to the short-chain dehydrogenases/reductases (SDR) family.</text>
</comment>